<reference key="1">
    <citation type="journal article" date="1994" name="J. Biol. Chem.">
        <title>The kaliotoxin family enlarged. Purification, characterization, and precursor nucleotide sequence of KTX2 from Androctonus australis venom.</title>
        <authorList>
            <person name="Laraba-Djebari F."/>
            <person name="Legros C."/>
            <person name="Crest M."/>
            <person name="Ceard B."/>
            <person name="Romi R."/>
            <person name="Mansuelle P."/>
            <person name="Jacquet G."/>
            <person name="van Rietschoten J."/>
            <person name="Gola M."/>
            <person name="Rochat H."/>
        </authorList>
    </citation>
    <scope>NUCLEOTIDE SEQUENCE [MRNA]</scope>
    <scope>PROTEIN SEQUENCE OF 23-59</scope>
    <scope>SUBCELLULAR LOCATION</scope>
    <source>
        <strain>Hector</strain>
        <tissue>Venom</tissue>
    </source>
</reference>
<reference key="2">
    <citation type="journal article" date="2018" name="Nat. Struct. Mol. Biol.">
        <title>Screening, large-scale production and structure-based classification of cystine-dense peptides.</title>
        <authorList>
            <person name="Correnti C.E."/>
            <person name="Gewe M.M."/>
            <person name="Mehlin C."/>
            <person name="Bandaranayake A.D."/>
            <person name="Johnsen W.A."/>
            <person name="Rupert P.B."/>
            <person name="Brusniak M.Y."/>
            <person name="Clarke M."/>
            <person name="Burke S.E."/>
            <person name="De Van Der Schueren W."/>
            <person name="Pilat K."/>
            <person name="Turnbaugh S.M."/>
            <person name="May D."/>
            <person name="Watson A."/>
            <person name="Chan M.K."/>
            <person name="Bahl C.D."/>
            <person name="Olson J.M."/>
            <person name="Strong R.K."/>
        </authorList>
    </citation>
    <scope>X-RAY CRYSTALLOGRAPHY (1.77 ANGSTROMS) OF 23-59</scope>
    <scope>FUNCTION</scope>
    <scope>SYNTHESIS OF 23-59</scope>
</reference>
<sequence>MKVFSAVLIILFVCSMIIGINAVRIPVSCKHSGQCLKPCKDAGMRFGKCMNGKCDCTPK</sequence>
<name>KAX35_ANDAU</name>
<gene>
    <name type="primary">KTX2</name>
</gene>
<protein>
    <recommendedName>
        <fullName>Potassium channel toxin alpha-KTx 3.5</fullName>
    </recommendedName>
    <alternativeName>
        <fullName evidence="4">Kaliotoxin-2</fullName>
        <shortName evidence="4">KTX-2</shortName>
    </alternativeName>
</protein>
<dbReference type="EMBL" id="S74733">
    <property type="protein sequence ID" value="AAB33535.1"/>
    <property type="molecule type" value="mRNA"/>
</dbReference>
<dbReference type="PIR" id="A55807">
    <property type="entry name" value="A55807"/>
</dbReference>
<dbReference type="PDB" id="6AY7">
    <property type="method" value="X-ray"/>
    <property type="resolution" value="1.77 A"/>
    <property type="chains" value="A/B=23-59"/>
</dbReference>
<dbReference type="PDBsum" id="6AY7"/>
<dbReference type="SMR" id="P45696"/>
<dbReference type="GO" id="GO:0005576">
    <property type="term" value="C:extracellular region"/>
    <property type="evidence" value="ECO:0007669"/>
    <property type="project" value="UniProtKB-SubCell"/>
</dbReference>
<dbReference type="GO" id="GO:0008200">
    <property type="term" value="F:ion channel inhibitor activity"/>
    <property type="evidence" value="ECO:0007669"/>
    <property type="project" value="InterPro"/>
</dbReference>
<dbReference type="GO" id="GO:0015459">
    <property type="term" value="F:potassium channel regulator activity"/>
    <property type="evidence" value="ECO:0007669"/>
    <property type="project" value="UniProtKB-KW"/>
</dbReference>
<dbReference type="GO" id="GO:0090729">
    <property type="term" value="F:toxin activity"/>
    <property type="evidence" value="ECO:0007669"/>
    <property type="project" value="UniProtKB-KW"/>
</dbReference>
<dbReference type="FunFam" id="3.30.30.10:FF:000009">
    <property type="entry name" value="Potassium channel toxin alpha-KTx 4.3"/>
    <property type="match status" value="1"/>
</dbReference>
<dbReference type="Gene3D" id="3.30.30.10">
    <property type="entry name" value="Knottin, scorpion toxin-like"/>
    <property type="match status" value="1"/>
</dbReference>
<dbReference type="InterPro" id="IPR036574">
    <property type="entry name" value="Scorpion_toxin-like_sf"/>
</dbReference>
<dbReference type="InterPro" id="IPR001947">
    <property type="entry name" value="Scorpion_toxinS_K_inh"/>
</dbReference>
<dbReference type="Pfam" id="PF00451">
    <property type="entry name" value="Toxin_2"/>
    <property type="match status" value="1"/>
</dbReference>
<dbReference type="PRINTS" id="PR00286">
    <property type="entry name" value="CHARYBDTOXIN"/>
</dbReference>
<dbReference type="SUPFAM" id="SSF57095">
    <property type="entry name" value="Scorpion toxin-like"/>
    <property type="match status" value="1"/>
</dbReference>
<dbReference type="PROSITE" id="PS01138">
    <property type="entry name" value="SCORP_SHORT_TOXIN"/>
    <property type="match status" value="1"/>
</dbReference>
<keyword id="KW-0002">3D-structure</keyword>
<keyword id="KW-1221">Calcium-activated potassium channel impairing toxin</keyword>
<keyword id="KW-0903">Direct protein sequencing</keyword>
<keyword id="KW-1015">Disulfide bond</keyword>
<keyword id="KW-0872">Ion channel impairing toxin</keyword>
<keyword id="KW-0528">Neurotoxin</keyword>
<keyword id="KW-0632">Potassium channel impairing toxin</keyword>
<keyword id="KW-0964">Secreted</keyword>
<keyword id="KW-0732">Signal</keyword>
<keyword id="KW-0800">Toxin</keyword>
<proteinExistence type="evidence at protein level"/>
<evidence type="ECO:0000255" key="1"/>
<evidence type="ECO:0000269" key="2">
    <source>
    </source>
</evidence>
<evidence type="ECO:0000269" key="3">
    <source>
    </source>
</evidence>
<evidence type="ECO:0000303" key="4">
    <source>
    </source>
</evidence>
<evidence type="ECO:0000305" key="5"/>
<evidence type="ECO:0000305" key="6">
    <source>
    </source>
</evidence>
<evidence type="ECO:0000312" key="7">
    <source>
        <dbReference type="PDB" id="6AY7"/>
    </source>
</evidence>
<evidence type="ECO:0007829" key="8">
    <source>
        <dbReference type="PDB" id="6AY7"/>
    </source>
</evidence>
<accession>P45696</accession>
<feature type="signal peptide" evidence="3">
    <location>
        <begin position="1"/>
        <end position="22"/>
    </location>
</feature>
<feature type="chain" id="PRO_0000035312" description="Potassium channel toxin alpha-KTx 3.5">
    <location>
        <begin position="23"/>
        <end position="59"/>
    </location>
</feature>
<feature type="region of interest" description="Interaction with Ca(2+)-activated K(+) channels" evidence="1">
    <location>
        <begin position="47"/>
        <end position="54"/>
    </location>
</feature>
<feature type="disulfide bond" evidence="2 7">
    <location>
        <begin position="29"/>
        <end position="49"/>
    </location>
</feature>
<feature type="disulfide bond" evidence="2 7">
    <location>
        <begin position="35"/>
        <end position="54"/>
    </location>
</feature>
<feature type="disulfide bond" evidence="2 7">
    <location>
        <begin position="39"/>
        <end position="56"/>
    </location>
</feature>
<feature type="strand" evidence="8">
    <location>
        <begin position="23"/>
        <end position="28"/>
    </location>
</feature>
<feature type="helix" evidence="8">
    <location>
        <begin position="32"/>
        <end position="35"/>
    </location>
</feature>
<feature type="helix" evidence="8">
    <location>
        <begin position="36"/>
        <end position="41"/>
    </location>
</feature>
<feature type="strand" evidence="8">
    <location>
        <begin position="45"/>
        <end position="50"/>
    </location>
</feature>
<feature type="strand" evidence="8">
    <location>
        <begin position="53"/>
        <end position="57"/>
    </location>
</feature>
<organism>
    <name type="scientific">Androctonus australis</name>
    <name type="common">Sahara scorpion</name>
    <dbReference type="NCBI Taxonomy" id="6858"/>
    <lineage>
        <taxon>Eukaryota</taxon>
        <taxon>Metazoa</taxon>
        <taxon>Ecdysozoa</taxon>
        <taxon>Arthropoda</taxon>
        <taxon>Chelicerata</taxon>
        <taxon>Arachnida</taxon>
        <taxon>Scorpiones</taxon>
        <taxon>Buthida</taxon>
        <taxon>Buthoidea</taxon>
        <taxon>Buthidae</taxon>
        <taxon>Androctonus</taxon>
    </lineage>
</organism>
<comment type="function">
    <text evidence="2 3">Has also been shown to inhibit with high potency Kv1.3/KCNA3 and with low potency Kv1.1/KCNA1 and Kv1.2/KCNA2 voltage-gated potassium channels (PubMed:29483648, PubMed:7806508). Also binds and inhibits the molluscan calcium-activated potassium channels KCa (Kd=135 nM) (PubMed:7806508).</text>
</comment>
<comment type="subcellular location">
    <subcellularLocation>
        <location evidence="3">Secreted</location>
    </subcellularLocation>
</comment>
<comment type="tissue specificity">
    <text evidence="6">Expressed by the venom gland.</text>
</comment>
<comment type="domain">
    <text evidence="5">Has the structural arrangement of an alpha-helix connected to antiparallel beta-sheets by disulfide bonds (CS-alpha/beta).</text>
</comment>
<comment type="similarity">
    <text evidence="5">Belongs to the short scorpion toxin superfamily. Potassium channel inhibitor family. Alpha-KTx 03 subfamily.</text>
</comment>